<comment type="function">
    <text evidence="1">Ribosome biogenesis factor. May be required for both optimal rDNA transcription and small subunit (SSU) pre-rRNA processing at sites A', A0, 1 and 2b (By similarity).</text>
</comment>
<comment type="subunit">
    <text evidence="1">Interacts with UTP4. Interacts with FBL/fibrillarin in a transcription-dependent manner. May associate with the proposed t-UTP subcomplex of the SSU processome containing at least UTP4, WDR43, HEATR1, UTP15, WDR75.</text>
</comment>
<comment type="subcellular location">
    <subcellularLocation>
        <location evidence="1">Nucleus</location>
        <location evidence="1">Nucleolus</location>
    </subcellularLocation>
</comment>
<protein>
    <recommendedName>
        <fullName>Nucleolar protein 11</fullName>
    </recommendedName>
</protein>
<sequence>MADLEEGFALTAVPLGSGPDGPLGVEQSGKTDQFLVTDSGRTVILYKVSDQKPLGSWSVKQGQIITCPAVCNFQTGEYIVVHDNKVLRIWNNEDVNLDKVFKATLSAEVYRIHSIQGTEPLVLFKEGAVRGLEALLAEPQQKIETVISDEEVIKWTKFFMVFRHPVLIFITEKHGNYFVYVQKFNSRILSKYTLLLGQEEKCVIQSFSTSVGRKFISLMSLSSDGCVYETLIPIHPSEPEKNQRLVQSQLLKSVVSGSARNGVALAILDQDHIAVLGAPLPASKECLSVWNTKFQTLQTSKELPQGTSGQLWYYGENLFMLHGKFLTVVPFKCEVSSLAGALGKLKHSQDPGIHATPHFVNWETSQGCGLGSQNSEQSKRILRRRKVEVSVQPEVPASTQLLATIQKDSEKHIEVELRKFLATKRTPDFHTIIGDVIIGLLGRCKAEPSFYPCNCLMQLVQTHVLSYSLCPGLMEFALEKTDVQILQLCLQQFPDIPESVTCACLKVFLSIGDDTLQDTDINMESVSDYMDPVQDGEMEEQTAFLQNGFSPEEDNCDSCAQKLKEKPQAAADESTSCPVTPKRAALLNAVLHSAYSETFLLPHLKDIPAQHSTLFLQYLYFLYLKCSENATMTLPGTHPPTLSQIMDWICLLLDANFTVVVMIPEAKRLLLSLYKFVKSQISICSELNKIEVSFRELQKLNQEKNNRELYSIEVLELF</sequence>
<gene>
    <name type="primary">NOL11</name>
</gene>
<evidence type="ECO:0000250" key="1">
    <source>
        <dbReference type="UniProtKB" id="Q9H8H0"/>
    </source>
</evidence>
<organism>
    <name type="scientific">Bos taurus</name>
    <name type="common">Bovine</name>
    <dbReference type="NCBI Taxonomy" id="9913"/>
    <lineage>
        <taxon>Eukaryota</taxon>
        <taxon>Metazoa</taxon>
        <taxon>Chordata</taxon>
        <taxon>Craniata</taxon>
        <taxon>Vertebrata</taxon>
        <taxon>Euteleostomi</taxon>
        <taxon>Mammalia</taxon>
        <taxon>Eutheria</taxon>
        <taxon>Laurasiatheria</taxon>
        <taxon>Artiodactyla</taxon>
        <taxon>Ruminantia</taxon>
        <taxon>Pecora</taxon>
        <taxon>Bovidae</taxon>
        <taxon>Bovinae</taxon>
        <taxon>Bos</taxon>
    </lineage>
</organism>
<proteinExistence type="evidence at transcript level"/>
<accession>Q3MHH2</accession>
<reference key="1">
    <citation type="submission" date="2005-09" db="EMBL/GenBank/DDBJ databases">
        <authorList>
            <consortium name="NIH - Mammalian Gene Collection (MGC) project"/>
        </authorList>
    </citation>
    <scope>NUCLEOTIDE SEQUENCE [LARGE SCALE MRNA]</scope>
    <source>
        <strain>Hereford</strain>
        <tissue>Thymus</tissue>
    </source>
</reference>
<dbReference type="EMBL" id="BC105239">
    <property type="protein sequence ID" value="AAI05240.1"/>
    <property type="molecule type" value="mRNA"/>
</dbReference>
<dbReference type="RefSeq" id="NP_001029697.1">
    <property type="nucleotide sequence ID" value="NM_001034525.1"/>
</dbReference>
<dbReference type="SMR" id="Q3MHH2"/>
<dbReference type="FunCoup" id="Q3MHH2">
    <property type="interactions" value="5108"/>
</dbReference>
<dbReference type="STRING" id="9913.ENSBTAP00000021210"/>
<dbReference type="PaxDb" id="9913-ENSBTAP00000021210"/>
<dbReference type="GeneID" id="517743"/>
<dbReference type="KEGG" id="bta:517743"/>
<dbReference type="CTD" id="25926"/>
<dbReference type="VEuPathDB" id="HostDB:ENSBTAG00000015951"/>
<dbReference type="eggNOG" id="ENOG502SB74">
    <property type="taxonomic scope" value="Eukaryota"/>
</dbReference>
<dbReference type="HOGENOM" id="CLU_025196_0_0_1"/>
<dbReference type="InParanoid" id="Q3MHH2"/>
<dbReference type="OMA" id="QGTTGQC"/>
<dbReference type="OrthoDB" id="6502630at2759"/>
<dbReference type="TreeFam" id="TF325877"/>
<dbReference type="Reactome" id="R-BTA-6791226">
    <property type="pathway name" value="Major pathway of rRNA processing in the nucleolus and cytosol"/>
</dbReference>
<dbReference type="CD-CODE" id="D7FE2080">
    <property type="entry name" value="Nucleolus"/>
</dbReference>
<dbReference type="Proteomes" id="UP000009136">
    <property type="component" value="Chromosome 19"/>
</dbReference>
<dbReference type="Bgee" id="ENSBTAG00000015951">
    <property type="expression patterns" value="Expressed in spermatid and 106 other cell types or tissues"/>
</dbReference>
<dbReference type="GO" id="GO:0005730">
    <property type="term" value="C:nucleolus"/>
    <property type="evidence" value="ECO:0000250"/>
    <property type="project" value="UniProtKB"/>
</dbReference>
<dbReference type="GO" id="GO:0034455">
    <property type="term" value="C:t-UTP complex"/>
    <property type="evidence" value="ECO:0000250"/>
    <property type="project" value="UniProtKB"/>
</dbReference>
<dbReference type="GO" id="GO:0030490">
    <property type="term" value="P:maturation of SSU-rRNA"/>
    <property type="evidence" value="ECO:0000250"/>
    <property type="project" value="UniProtKB"/>
</dbReference>
<dbReference type="GO" id="GO:1901838">
    <property type="term" value="P:positive regulation of transcription of nucleolar large rRNA by RNA polymerase I"/>
    <property type="evidence" value="ECO:0000250"/>
    <property type="project" value="UniProtKB"/>
</dbReference>
<dbReference type="InterPro" id="IPR042859">
    <property type="entry name" value="NOL11"/>
</dbReference>
<dbReference type="InterPro" id="IPR048897">
    <property type="entry name" value="Nol11_C"/>
</dbReference>
<dbReference type="InterPro" id="IPR012584">
    <property type="entry name" value="NOL11_N"/>
</dbReference>
<dbReference type="InterPro" id="IPR036322">
    <property type="entry name" value="WD40_repeat_dom_sf"/>
</dbReference>
<dbReference type="PANTHER" id="PTHR15633">
    <property type="entry name" value="NUCLEOLAR PROTEIN 11"/>
    <property type="match status" value="1"/>
</dbReference>
<dbReference type="PANTHER" id="PTHR15633:SF2">
    <property type="entry name" value="NUCLEOLAR PROTEIN 11"/>
    <property type="match status" value="1"/>
</dbReference>
<dbReference type="Pfam" id="PF20998">
    <property type="entry name" value="Nol11_C"/>
    <property type="match status" value="1"/>
</dbReference>
<dbReference type="Pfam" id="PF08168">
    <property type="entry name" value="NOL11_N"/>
    <property type="match status" value="1"/>
</dbReference>
<dbReference type="SUPFAM" id="SSF50978">
    <property type="entry name" value="WD40 repeat-like"/>
    <property type="match status" value="1"/>
</dbReference>
<keyword id="KW-0010">Activator</keyword>
<keyword id="KW-0488">Methylation</keyword>
<keyword id="KW-0539">Nucleus</keyword>
<keyword id="KW-1185">Reference proteome</keyword>
<keyword id="KW-0690">Ribosome biogenesis</keyword>
<keyword id="KW-0698">rRNA processing</keyword>
<keyword id="KW-0804">Transcription</keyword>
<keyword id="KW-0805">Transcription regulation</keyword>
<name>NOL11_BOVIN</name>
<feature type="chain" id="PRO_0000256834" description="Nucleolar protein 11">
    <location>
        <begin position="1"/>
        <end position="718"/>
    </location>
</feature>
<feature type="modified residue" description="N6-methyllysine" evidence="1">
    <location>
        <position position="346"/>
    </location>
</feature>